<keyword id="KW-0054">Arabinose catabolism</keyword>
<keyword id="KW-0119">Carbohydrate metabolism</keyword>
<keyword id="KW-0413">Isomerase</keyword>
<keyword id="KW-0464">Manganese</keyword>
<keyword id="KW-0479">Metal-binding</keyword>
<keyword id="KW-1185">Reference proteome</keyword>
<dbReference type="EC" id="5.3.1.4" evidence="1"/>
<dbReference type="EMBL" id="CP000934">
    <property type="protein sequence ID" value="ACE84530.1"/>
    <property type="molecule type" value="Genomic_DNA"/>
</dbReference>
<dbReference type="RefSeq" id="WP_012488594.1">
    <property type="nucleotide sequence ID" value="NC_010995.1"/>
</dbReference>
<dbReference type="SMR" id="B3PD57"/>
<dbReference type="STRING" id="498211.CJA_3015"/>
<dbReference type="KEGG" id="cja:CJA_3015"/>
<dbReference type="eggNOG" id="COG2160">
    <property type="taxonomic scope" value="Bacteria"/>
</dbReference>
<dbReference type="HOGENOM" id="CLU_045663_0_0_6"/>
<dbReference type="OrthoDB" id="9765600at2"/>
<dbReference type="UniPathway" id="UPA00145">
    <property type="reaction ID" value="UER00565"/>
</dbReference>
<dbReference type="Proteomes" id="UP000001036">
    <property type="component" value="Chromosome"/>
</dbReference>
<dbReference type="GO" id="GO:0005829">
    <property type="term" value="C:cytosol"/>
    <property type="evidence" value="ECO:0007669"/>
    <property type="project" value="TreeGrafter"/>
</dbReference>
<dbReference type="GO" id="GO:0008733">
    <property type="term" value="F:L-arabinose isomerase activity"/>
    <property type="evidence" value="ECO:0007669"/>
    <property type="project" value="UniProtKB-UniRule"/>
</dbReference>
<dbReference type="GO" id="GO:0030145">
    <property type="term" value="F:manganese ion binding"/>
    <property type="evidence" value="ECO:0007669"/>
    <property type="project" value="UniProtKB-UniRule"/>
</dbReference>
<dbReference type="GO" id="GO:0019569">
    <property type="term" value="P:L-arabinose catabolic process to xylulose 5-phosphate"/>
    <property type="evidence" value="ECO:0007669"/>
    <property type="project" value="UniProtKB-UniRule"/>
</dbReference>
<dbReference type="Gene3D" id="3.40.50.10940">
    <property type="match status" value="1"/>
</dbReference>
<dbReference type="HAMAP" id="MF_00519">
    <property type="entry name" value="Arabinose_Isome"/>
    <property type="match status" value="1"/>
</dbReference>
<dbReference type="InterPro" id="IPR024664">
    <property type="entry name" value="Ara_Isoase_C"/>
</dbReference>
<dbReference type="InterPro" id="IPR055390">
    <property type="entry name" value="AraA_central"/>
</dbReference>
<dbReference type="InterPro" id="IPR055389">
    <property type="entry name" value="AraA_N"/>
</dbReference>
<dbReference type="InterPro" id="IPR038583">
    <property type="entry name" value="AraA_N_sf"/>
</dbReference>
<dbReference type="InterPro" id="IPR004216">
    <property type="entry name" value="Fuc/Ara_isomerase_C"/>
</dbReference>
<dbReference type="InterPro" id="IPR009015">
    <property type="entry name" value="Fucose_isomerase_N/cen_sf"/>
</dbReference>
<dbReference type="InterPro" id="IPR003762">
    <property type="entry name" value="Lara_isomerase"/>
</dbReference>
<dbReference type="NCBIfam" id="NF002795">
    <property type="entry name" value="PRK02929.1"/>
    <property type="match status" value="1"/>
</dbReference>
<dbReference type="PANTHER" id="PTHR38464">
    <property type="entry name" value="L-ARABINOSE ISOMERASE"/>
    <property type="match status" value="1"/>
</dbReference>
<dbReference type="PANTHER" id="PTHR38464:SF1">
    <property type="entry name" value="L-ARABINOSE ISOMERASE"/>
    <property type="match status" value="1"/>
</dbReference>
<dbReference type="Pfam" id="PF24856">
    <property type="entry name" value="AraA_central"/>
    <property type="match status" value="1"/>
</dbReference>
<dbReference type="Pfam" id="PF02610">
    <property type="entry name" value="AraA_N"/>
    <property type="match status" value="1"/>
</dbReference>
<dbReference type="Pfam" id="PF11762">
    <property type="entry name" value="Arabinose_Iso_C"/>
    <property type="match status" value="1"/>
</dbReference>
<dbReference type="PIRSF" id="PIRSF001478">
    <property type="entry name" value="L-ara_isomerase"/>
    <property type="match status" value="1"/>
</dbReference>
<dbReference type="SUPFAM" id="SSF50443">
    <property type="entry name" value="FucI/AraA C-terminal domain-like"/>
    <property type="match status" value="1"/>
</dbReference>
<dbReference type="SUPFAM" id="SSF53743">
    <property type="entry name" value="FucI/AraA N-terminal and middle domains"/>
    <property type="match status" value="1"/>
</dbReference>
<name>ARAA_CELJU</name>
<accession>B3PD57</accession>
<protein>
    <recommendedName>
        <fullName evidence="1">L-arabinose isomerase</fullName>
        <ecNumber evidence="1">5.3.1.4</ecNumber>
    </recommendedName>
</protein>
<evidence type="ECO:0000255" key="1">
    <source>
        <dbReference type="HAMAP-Rule" id="MF_00519"/>
    </source>
</evidence>
<gene>
    <name evidence="1" type="primary">araA</name>
    <name type="ordered locus">CJA_3015</name>
</gene>
<organism>
    <name type="scientific">Cellvibrio japonicus (strain Ueda107)</name>
    <name type="common">Pseudomonas fluorescens subsp. cellulosa</name>
    <dbReference type="NCBI Taxonomy" id="498211"/>
    <lineage>
        <taxon>Bacteria</taxon>
        <taxon>Pseudomonadati</taxon>
        <taxon>Pseudomonadota</taxon>
        <taxon>Gammaproteobacteria</taxon>
        <taxon>Cellvibrionales</taxon>
        <taxon>Cellvibrionaceae</taxon>
        <taxon>Cellvibrio</taxon>
    </lineage>
</organism>
<proteinExistence type="inferred from homology"/>
<feature type="chain" id="PRO_1000127598" description="L-arabinose isomerase">
    <location>
        <begin position="1"/>
        <end position="500"/>
    </location>
</feature>
<feature type="binding site" evidence="1">
    <location>
        <position position="306"/>
    </location>
    <ligand>
        <name>Mn(2+)</name>
        <dbReference type="ChEBI" id="CHEBI:29035"/>
    </ligand>
</feature>
<feature type="binding site" evidence="1">
    <location>
        <position position="333"/>
    </location>
    <ligand>
        <name>Mn(2+)</name>
        <dbReference type="ChEBI" id="CHEBI:29035"/>
    </ligand>
</feature>
<feature type="binding site" evidence="1">
    <location>
        <position position="349"/>
    </location>
    <ligand>
        <name>Mn(2+)</name>
        <dbReference type="ChEBI" id="CHEBI:29035"/>
    </ligand>
</feature>
<feature type="binding site" evidence="1">
    <location>
        <position position="448"/>
    </location>
    <ligand>
        <name>Mn(2+)</name>
        <dbReference type="ChEBI" id="CHEBI:29035"/>
    </ligand>
</feature>
<reference key="1">
    <citation type="journal article" date="2008" name="J. Bacteriol.">
        <title>Insights into plant cell wall degradation from the genome sequence of the soil bacterium Cellvibrio japonicus.</title>
        <authorList>
            <person name="DeBoy R.T."/>
            <person name="Mongodin E.F."/>
            <person name="Fouts D.E."/>
            <person name="Tailford L.E."/>
            <person name="Khouri H."/>
            <person name="Emerson J.B."/>
            <person name="Mohamoud Y."/>
            <person name="Watkins K."/>
            <person name="Henrissat B."/>
            <person name="Gilbert H.J."/>
            <person name="Nelson K.E."/>
        </authorList>
    </citation>
    <scope>NUCLEOTIDE SEQUENCE [LARGE SCALE GENOMIC DNA]</scope>
    <source>
        <strain>Ueda107</strain>
    </source>
</reference>
<sequence>MKVYGDKEVWLVTGSQHLYGPGVLKQVAENSQKIAAGLTESSLVSIKVVAQETVKSPGEILAVAQAANSNPNCVGLILWMHTFSPAKMWIGGLRALNKPYMHLHTQFNAELPFSDINMHFMNLNQSAHGDREFGHISTRLRQDRKVVVGHWATASVQQQIDSWCRVAMGWYESQNLKIARFGDNMRQVAVTEGDKVSAQIQFGYEVHAYGLGDLQKVVDAVTDEQVAAQIETYKKDYEVSPAIFDDEHQFQMLKNEARLELGMLKFLTDGGFGAFTNCFENLTGLTNLPGLATQRLMQQGFGYGGEGDWKTAAMVRIAKVMSKGREGGSSFMEDYTYHFGAVDQVLGAHMLEVCPSIAAAKPKLEVHLHTIGCRNDIARLIFTGKTGPALCISVIDMGTRFRMIINEVDTVNPPQELPQLPVAKALWEPRPNLEIAASAWIHAGGAHHSAYTQGITVDEAVDYAEMAGIEAVVIGADTTVRSFKTELRHNAAYYHLKDGV</sequence>
<comment type="function">
    <text evidence="1">Catalyzes the conversion of L-arabinose to L-ribulose.</text>
</comment>
<comment type="catalytic activity">
    <reaction evidence="1">
        <text>beta-L-arabinopyranose = L-ribulose</text>
        <dbReference type="Rhea" id="RHEA:14821"/>
        <dbReference type="ChEBI" id="CHEBI:16880"/>
        <dbReference type="ChEBI" id="CHEBI:40886"/>
        <dbReference type="EC" id="5.3.1.4"/>
    </reaction>
</comment>
<comment type="cofactor">
    <cofactor evidence="1">
        <name>Mn(2+)</name>
        <dbReference type="ChEBI" id="CHEBI:29035"/>
    </cofactor>
    <text evidence="1">Binds 1 Mn(2+) ion per subunit.</text>
</comment>
<comment type="pathway">
    <text evidence="1">Carbohydrate degradation; L-arabinose degradation via L-ribulose; D-xylulose 5-phosphate from L-arabinose (bacterial route): step 1/3.</text>
</comment>
<comment type="similarity">
    <text evidence="1">Belongs to the arabinose isomerase family.</text>
</comment>